<accession>O47892</accession>
<accession>D4QAU7</accession>
<feature type="chain" id="PRO_0000061053" description="Cytochrome b">
    <location>
        <begin position="1"/>
        <end position="380"/>
    </location>
</feature>
<feature type="transmembrane region" description="Helical" evidence="2">
    <location>
        <begin position="33"/>
        <end position="53"/>
    </location>
</feature>
<feature type="transmembrane region" description="Helical" evidence="2">
    <location>
        <begin position="77"/>
        <end position="98"/>
    </location>
</feature>
<feature type="transmembrane region" description="Helical" evidence="2">
    <location>
        <begin position="113"/>
        <end position="133"/>
    </location>
</feature>
<feature type="transmembrane region" description="Helical" evidence="2">
    <location>
        <begin position="178"/>
        <end position="198"/>
    </location>
</feature>
<feature type="transmembrane region" description="Helical" evidence="2">
    <location>
        <begin position="226"/>
        <end position="246"/>
    </location>
</feature>
<feature type="transmembrane region" description="Helical" evidence="2">
    <location>
        <begin position="288"/>
        <end position="308"/>
    </location>
</feature>
<feature type="transmembrane region" description="Helical" evidence="2">
    <location>
        <begin position="320"/>
        <end position="340"/>
    </location>
</feature>
<feature type="transmembrane region" description="Helical" evidence="2">
    <location>
        <begin position="347"/>
        <end position="367"/>
    </location>
</feature>
<feature type="binding site" description="axial binding residue" evidence="2">
    <location>
        <position position="83"/>
    </location>
    <ligand>
        <name>heme b</name>
        <dbReference type="ChEBI" id="CHEBI:60344"/>
        <label>b562</label>
    </ligand>
    <ligandPart>
        <name>Fe</name>
        <dbReference type="ChEBI" id="CHEBI:18248"/>
    </ligandPart>
</feature>
<feature type="binding site" description="axial binding residue" evidence="2">
    <location>
        <position position="97"/>
    </location>
    <ligand>
        <name>heme b</name>
        <dbReference type="ChEBI" id="CHEBI:60344"/>
        <label>b566</label>
    </ligand>
    <ligandPart>
        <name>Fe</name>
        <dbReference type="ChEBI" id="CHEBI:18248"/>
    </ligandPart>
</feature>
<feature type="binding site" description="axial binding residue" evidence="2">
    <location>
        <position position="182"/>
    </location>
    <ligand>
        <name>heme b</name>
        <dbReference type="ChEBI" id="CHEBI:60344"/>
        <label>b562</label>
    </ligand>
    <ligandPart>
        <name>Fe</name>
        <dbReference type="ChEBI" id="CHEBI:18248"/>
    </ligandPart>
</feature>
<feature type="binding site" description="axial binding residue" evidence="2">
    <location>
        <position position="196"/>
    </location>
    <ligand>
        <name>heme b</name>
        <dbReference type="ChEBI" id="CHEBI:60344"/>
        <label>b566</label>
    </ligand>
    <ligandPart>
        <name>Fe</name>
        <dbReference type="ChEBI" id="CHEBI:18248"/>
    </ligandPart>
</feature>
<feature type="binding site" evidence="2">
    <location>
        <position position="201"/>
    </location>
    <ligand>
        <name>a ubiquinone</name>
        <dbReference type="ChEBI" id="CHEBI:16389"/>
    </ligand>
</feature>
<feature type="sequence conflict" description="In Ref. 1; CAA73742." ref="1">
    <original>M</original>
    <variation>V</variation>
    <location>
        <position position="11"/>
    </location>
</feature>
<feature type="sequence conflict" description="In Ref. 1; CAA73742." ref="1">
    <original>V</original>
    <variation>I</variation>
    <location>
        <position position="42"/>
    </location>
</feature>
<feature type="sequence conflict" description="In Ref. 1; CAA73742." ref="1">
    <original>L</original>
    <variation>M</variation>
    <location>
        <position position="102"/>
    </location>
</feature>
<feature type="sequence conflict" description="In Ref. 1; CAA73742." ref="1">
    <original>A</original>
    <variation>T</variation>
    <location>
        <position position="194"/>
    </location>
</feature>
<feature type="sequence conflict" description="In Ref. 1; CAA73742." ref="1">
    <original>V</original>
    <variation>M</variation>
    <location>
        <position position="366"/>
    </location>
</feature>
<protein>
    <recommendedName>
        <fullName>Cytochrome b</fullName>
    </recommendedName>
    <alternativeName>
        <fullName>Complex III subunit 3</fullName>
    </alternativeName>
    <alternativeName>
        <fullName>Complex III subunit III</fullName>
    </alternativeName>
    <alternativeName>
        <fullName>Cytochrome b-c1 complex subunit 3</fullName>
    </alternativeName>
    <alternativeName>
        <fullName>Ubiquinol-cytochrome-c reductase complex cytochrome b subunit</fullName>
    </alternativeName>
</protein>
<evidence type="ECO:0000250" key="1"/>
<evidence type="ECO:0000250" key="2">
    <source>
        <dbReference type="UniProtKB" id="P00157"/>
    </source>
</evidence>
<evidence type="ECO:0000255" key="3">
    <source>
        <dbReference type="PROSITE-ProRule" id="PRU00967"/>
    </source>
</evidence>
<evidence type="ECO:0000255" key="4">
    <source>
        <dbReference type="PROSITE-ProRule" id="PRU00968"/>
    </source>
</evidence>
<keyword id="KW-0249">Electron transport</keyword>
<keyword id="KW-0349">Heme</keyword>
<keyword id="KW-0408">Iron</keyword>
<keyword id="KW-0472">Membrane</keyword>
<keyword id="KW-0479">Metal-binding</keyword>
<keyword id="KW-0496">Mitochondrion</keyword>
<keyword id="KW-0999">Mitochondrion inner membrane</keyword>
<keyword id="KW-1185">Reference proteome</keyword>
<keyword id="KW-0679">Respiratory chain</keyword>
<keyword id="KW-0812">Transmembrane</keyword>
<keyword id="KW-1133">Transmembrane helix</keyword>
<keyword id="KW-0813">Transport</keyword>
<keyword id="KW-0830">Ubiquinone</keyword>
<geneLocation type="mitochondrion"/>
<gene>
    <name type="primary">MT-CYB</name>
    <name type="synonym">COB</name>
    <name type="synonym">CYTB</name>
    <name type="synonym">MTCYB</name>
</gene>
<reference key="1">
    <citation type="journal article" date="1998" name="Mol. Phylogenet. Evol.">
        <title>Evolution of the gibbon subgenera inferred from cytochrome b DNA sequence data.</title>
        <authorList>
            <person name="Hall L.M."/>
            <person name="Jones D.S."/>
            <person name="Wood B.A."/>
        </authorList>
    </citation>
    <scope>NUCLEOTIDE SEQUENCE [GENOMIC DNA]</scope>
</reference>
<reference key="2">
    <citation type="journal article" date="2010" name="Mol. Phylogenet. Evol.">
        <title>Phylogenetic relationships and divergence dates of the whole mitochondrial genome sequences among three gibbon genera.</title>
        <authorList>
            <person name="Matsudaira K."/>
            <person name="Ishida T."/>
        </authorList>
    </citation>
    <scope>NUCLEOTIDE SEQUENCE [LARGE SCALE GENOMIC DNA]</scope>
</reference>
<organism>
    <name type="scientific">Nomascus leucogenys</name>
    <name type="common">Northern white-cheeked gibbon</name>
    <name type="synonym">Hylobates leucogenys</name>
    <dbReference type="NCBI Taxonomy" id="61853"/>
    <lineage>
        <taxon>Eukaryota</taxon>
        <taxon>Metazoa</taxon>
        <taxon>Chordata</taxon>
        <taxon>Craniata</taxon>
        <taxon>Vertebrata</taxon>
        <taxon>Euteleostomi</taxon>
        <taxon>Mammalia</taxon>
        <taxon>Eutheria</taxon>
        <taxon>Euarchontoglires</taxon>
        <taxon>Primates</taxon>
        <taxon>Haplorrhini</taxon>
        <taxon>Catarrhini</taxon>
        <taxon>Hylobatidae</taxon>
        <taxon>Nomascus</taxon>
    </lineage>
</organism>
<sequence length="380" mass="42764">MTPLRKTNPLMKLINHSLVDLPAPSNISMWWNLGSLLGTCLVLQIVTGLFLAMHYTPDASMAFSSVAHITRDVNYGWVIRYLHANGASMFFICLFLHIGRGLYYGSFLYLETWNIGIILLLATMATAFMGYVLPWGQMSFWGATVITNLLSAVPYIGTDLVQWVWGGYSVDNATLTRFFTFHFILPFIITALVALHLLFLHETGSNNPLGISSQPDKITFHPYYTTKDILGLFLLLLTLMSLVLFSPDLLGDPDNYIQANPLSTPPHIKPEWYFLFAYAILRSVPNKLGGVLALLLSILILMTIPMLHTAKQQSMMFRPLSQLTYWLWAANLLTLTWIGGQPVSYPFITIGQVTSVLYFITILILVPTASLIENKMLKWT</sequence>
<dbReference type="EMBL" id="Y13306">
    <property type="protein sequence ID" value="CAA73742.1"/>
    <property type="molecule type" value="Genomic_DNA"/>
</dbReference>
<dbReference type="EMBL" id="AB504751">
    <property type="protein sequence ID" value="BAJ04786.1"/>
    <property type="molecule type" value="Genomic_DNA"/>
</dbReference>
<dbReference type="RefSeq" id="YP_003587394.1">
    <property type="nucleotide sequence ID" value="NC_014051.1"/>
</dbReference>
<dbReference type="SMR" id="O47892"/>
<dbReference type="FunCoup" id="O47892">
    <property type="interactions" value="328"/>
</dbReference>
<dbReference type="GeneID" id="9072885"/>
<dbReference type="CTD" id="4519"/>
<dbReference type="InParanoid" id="O47892"/>
<dbReference type="Proteomes" id="UP000001073">
    <property type="component" value="Mitochondrion"/>
</dbReference>
<dbReference type="GO" id="GO:0005743">
    <property type="term" value="C:mitochondrial inner membrane"/>
    <property type="evidence" value="ECO:0007669"/>
    <property type="project" value="UniProtKB-SubCell"/>
</dbReference>
<dbReference type="GO" id="GO:0045275">
    <property type="term" value="C:respiratory chain complex III"/>
    <property type="evidence" value="ECO:0007669"/>
    <property type="project" value="InterPro"/>
</dbReference>
<dbReference type="GO" id="GO:0046872">
    <property type="term" value="F:metal ion binding"/>
    <property type="evidence" value="ECO:0007669"/>
    <property type="project" value="UniProtKB-KW"/>
</dbReference>
<dbReference type="GO" id="GO:0008121">
    <property type="term" value="F:ubiquinol-cytochrome-c reductase activity"/>
    <property type="evidence" value="ECO:0007669"/>
    <property type="project" value="InterPro"/>
</dbReference>
<dbReference type="GO" id="GO:0006122">
    <property type="term" value="P:mitochondrial electron transport, ubiquinol to cytochrome c"/>
    <property type="evidence" value="ECO:0007669"/>
    <property type="project" value="TreeGrafter"/>
</dbReference>
<dbReference type="CDD" id="cd00290">
    <property type="entry name" value="cytochrome_b_C"/>
    <property type="match status" value="1"/>
</dbReference>
<dbReference type="CDD" id="cd00284">
    <property type="entry name" value="Cytochrome_b_N"/>
    <property type="match status" value="1"/>
</dbReference>
<dbReference type="FunFam" id="1.20.810.10:FF:000002">
    <property type="entry name" value="Cytochrome b"/>
    <property type="match status" value="1"/>
</dbReference>
<dbReference type="Gene3D" id="1.20.810.10">
    <property type="entry name" value="Cytochrome Bc1 Complex, Chain C"/>
    <property type="match status" value="1"/>
</dbReference>
<dbReference type="InterPro" id="IPR005798">
    <property type="entry name" value="Cyt_b/b6_C"/>
</dbReference>
<dbReference type="InterPro" id="IPR036150">
    <property type="entry name" value="Cyt_b/b6_C_sf"/>
</dbReference>
<dbReference type="InterPro" id="IPR005797">
    <property type="entry name" value="Cyt_b/b6_N"/>
</dbReference>
<dbReference type="InterPro" id="IPR027387">
    <property type="entry name" value="Cytb/b6-like_sf"/>
</dbReference>
<dbReference type="InterPro" id="IPR030689">
    <property type="entry name" value="Cytochrome_b"/>
</dbReference>
<dbReference type="InterPro" id="IPR048260">
    <property type="entry name" value="Cytochrome_b_C_euk/bac"/>
</dbReference>
<dbReference type="InterPro" id="IPR048259">
    <property type="entry name" value="Cytochrome_b_N_euk/bac"/>
</dbReference>
<dbReference type="InterPro" id="IPR016174">
    <property type="entry name" value="Di-haem_cyt_TM"/>
</dbReference>
<dbReference type="PANTHER" id="PTHR19271">
    <property type="entry name" value="CYTOCHROME B"/>
    <property type="match status" value="1"/>
</dbReference>
<dbReference type="PANTHER" id="PTHR19271:SF16">
    <property type="entry name" value="CYTOCHROME B"/>
    <property type="match status" value="1"/>
</dbReference>
<dbReference type="Pfam" id="PF00032">
    <property type="entry name" value="Cytochrom_B_C"/>
    <property type="match status" value="1"/>
</dbReference>
<dbReference type="Pfam" id="PF00033">
    <property type="entry name" value="Cytochrome_B"/>
    <property type="match status" value="1"/>
</dbReference>
<dbReference type="PIRSF" id="PIRSF038885">
    <property type="entry name" value="COB"/>
    <property type="match status" value="1"/>
</dbReference>
<dbReference type="SUPFAM" id="SSF81648">
    <property type="entry name" value="a domain/subunit of cytochrome bc1 complex (Ubiquinol-cytochrome c reductase)"/>
    <property type="match status" value="1"/>
</dbReference>
<dbReference type="SUPFAM" id="SSF81342">
    <property type="entry name" value="Transmembrane di-heme cytochromes"/>
    <property type="match status" value="1"/>
</dbReference>
<dbReference type="PROSITE" id="PS51003">
    <property type="entry name" value="CYTB_CTER"/>
    <property type="match status" value="1"/>
</dbReference>
<dbReference type="PROSITE" id="PS51002">
    <property type="entry name" value="CYTB_NTER"/>
    <property type="match status" value="1"/>
</dbReference>
<name>CYB_NOMLE</name>
<proteinExistence type="inferred from homology"/>
<comment type="function">
    <text evidence="2">Component of the ubiquinol-cytochrome c reductase complex (complex III or cytochrome b-c1 complex) that is part of the mitochondrial respiratory chain. The b-c1 complex mediates electron transfer from ubiquinol to cytochrome c. Contributes to the generation of a proton gradient across the mitochondrial membrane that is then used for ATP synthesis.</text>
</comment>
<comment type="cofactor">
    <cofactor evidence="2">
        <name>heme b</name>
        <dbReference type="ChEBI" id="CHEBI:60344"/>
    </cofactor>
    <text evidence="2">Binds 2 heme b groups non-covalently.</text>
</comment>
<comment type="subunit">
    <text evidence="2">The cytochrome bc1 complex contains 11 subunits: 3 respiratory subunits (MT-CYB, CYC1 and UQCRFS1), 2 core proteins (UQCRC1 and UQCRC2) and 6 low-molecular weight proteins (UQCRH/QCR6, UQCRB/QCR7, UQCRQ/QCR8, UQCR10/QCR9, UQCR11/QCR10 and a cleavage product of UQCRFS1). This cytochrome bc1 complex then forms a dimer.</text>
</comment>
<comment type="subcellular location">
    <subcellularLocation>
        <location evidence="2">Mitochondrion inner membrane</location>
        <topology evidence="2">Multi-pass membrane protein</topology>
    </subcellularLocation>
</comment>
<comment type="miscellaneous">
    <text evidence="1">Heme 1 (or BL or b562) is low-potential and absorbs at about 562 nm, and heme 2 (or BH or b566) is high-potential and absorbs at about 566 nm.</text>
</comment>
<comment type="similarity">
    <text evidence="3 4">Belongs to the cytochrome b family.</text>
</comment>
<comment type="caution">
    <text evidence="2">The full-length protein contains only eight transmembrane helices, not nine as predicted by bioinformatics tools.</text>
</comment>